<name>TSAD_RICPU</name>
<proteinExistence type="inferred from homology"/>
<feature type="chain" id="PRO_1000215308" description="tRNA N6-adenosine threonylcarbamoyltransferase">
    <location>
        <begin position="1"/>
        <end position="344"/>
    </location>
</feature>
<feature type="binding site" evidence="1">
    <location>
        <position position="112"/>
    </location>
    <ligand>
        <name>Fe cation</name>
        <dbReference type="ChEBI" id="CHEBI:24875"/>
    </ligand>
</feature>
<feature type="binding site" evidence="1">
    <location>
        <position position="116"/>
    </location>
    <ligand>
        <name>Fe cation</name>
        <dbReference type="ChEBI" id="CHEBI:24875"/>
    </ligand>
</feature>
<feature type="binding site" evidence="1">
    <location>
        <begin position="134"/>
        <end position="138"/>
    </location>
    <ligand>
        <name>substrate</name>
    </ligand>
</feature>
<feature type="binding site" evidence="1">
    <location>
        <position position="167"/>
    </location>
    <ligand>
        <name>substrate</name>
    </ligand>
</feature>
<feature type="binding site" evidence="1">
    <location>
        <position position="180"/>
    </location>
    <ligand>
        <name>substrate</name>
    </ligand>
</feature>
<feature type="binding site" evidence="1">
    <location>
        <position position="280"/>
    </location>
    <ligand>
        <name>substrate</name>
    </ligand>
</feature>
<feature type="binding site" evidence="1">
    <location>
        <position position="308"/>
    </location>
    <ligand>
        <name>Fe cation</name>
        <dbReference type="ChEBI" id="CHEBI:24875"/>
    </ligand>
</feature>
<accession>C4K157</accession>
<dbReference type="EC" id="2.3.1.234" evidence="1"/>
<dbReference type="EMBL" id="CP001227">
    <property type="protein sequence ID" value="ACR47308.1"/>
    <property type="molecule type" value="Genomic_DNA"/>
</dbReference>
<dbReference type="RefSeq" id="WP_012736574.1">
    <property type="nucleotide sequence ID" value="NC_012730.1"/>
</dbReference>
<dbReference type="SMR" id="C4K157"/>
<dbReference type="KEGG" id="rpk:RPR_02360"/>
<dbReference type="HOGENOM" id="CLU_023208_0_2_5"/>
<dbReference type="Proteomes" id="UP000005015">
    <property type="component" value="Chromosome"/>
</dbReference>
<dbReference type="GO" id="GO:0005737">
    <property type="term" value="C:cytoplasm"/>
    <property type="evidence" value="ECO:0007669"/>
    <property type="project" value="UniProtKB-SubCell"/>
</dbReference>
<dbReference type="GO" id="GO:0005506">
    <property type="term" value="F:iron ion binding"/>
    <property type="evidence" value="ECO:0007669"/>
    <property type="project" value="UniProtKB-UniRule"/>
</dbReference>
<dbReference type="GO" id="GO:0061711">
    <property type="term" value="F:N(6)-L-threonylcarbamoyladenine synthase activity"/>
    <property type="evidence" value="ECO:0007669"/>
    <property type="project" value="UniProtKB-EC"/>
</dbReference>
<dbReference type="GO" id="GO:0002949">
    <property type="term" value="P:tRNA threonylcarbamoyladenosine modification"/>
    <property type="evidence" value="ECO:0007669"/>
    <property type="project" value="UniProtKB-UniRule"/>
</dbReference>
<dbReference type="CDD" id="cd24133">
    <property type="entry name" value="ASKHA_NBD_TsaD_bac"/>
    <property type="match status" value="1"/>
</dbReference>
<dbReference type="FunFam" id="3.30.420.40:FF:000040">
    <property type="entry name" value="tRNA N6-adenosine threonylcarbamoyltransferase"/>
    <property type="match status" value="1"/>
</dbReference>
<dbReference type="Gene3D" id="3.30.420.40">
    <property type="match status" value="2"/>
</dbReference>
<dbReference type="HAMAP" id="MF_01445">
    <property type="entry name" value="TsaD"/>
    <property type="match status" value="1"/>
</dbReference>
<dbReference type="InterPro" id="IPR043129">
    <property type="entry name" value="ATPase_NBD"/>
</dbReference>
<dbReference type="InterPro" id="IPR000905">
    <property type="entry name" value="Gcp-like_dom"/>
</dbReference>
<dbReference type="InterPro" id="IPR017861">
    <property type="entry name" value="KAE1/TsaD"/>
</dbReference>
<dbReference type="InterPro" id="IPR017860">
    <property type="entry name" value="Peptidase_M22_CS"/>
</dbReference>
<dbReference type="InterPro" id="IPR022450">
    <property type="entry name" value="TsaD"/>
</dbReference>
<dbReference type="NCBIfam" id="TIGR00329">
    <property type="entry name" value="gcp_kae1"/>
    <property type="match status" value="1"/>
</dbReference>
<dbReference type="NCBIfam" id="TIGR03723">
    <property type="entry name" value="T6A_TsaD_YgjD"/>
    <property type="match status" value="1"/>
</dbReference>
<dbReference type="PANTHER" id="PTHR11735">
    <property type="entry name" value="TRNA N6-ADENOSINE THREONYLCARBAMOYLTRANSFERASE"/>
    <property type="match status" value="1"/>
</dbReference>
<dbReference type="PANTHER" id="PTHR11735:SF6">
    <property type="entry name" value="TRNA N6-ADENOSINE THREONYLCARBAMOYLTRANSFERASE, MITOCHONDRIAL"/>
    <property type="match status" value="1"/>
</dbReference>
<dbReference type="Pfam" id="PF00814">
    <property type="entry name" value="TsaD"/>
    <property type="match status" value="1"/>
</dbReference>
<dbReference type="PRINTS" id="PR00789">
    <property type="entry name" value="OSIALOPTASE"/>
</dbReference>
<dbReference type="SUPFAM" id="SSF53067">
    <property type="entry name" value="Actin-like ATPase domain"/>
    <property type="match status" value="2"/>
</dbReference>
<dbReference type="PROSITE" id="PS01016">
    <property type="entry name" value="GLYCOPROTEASE"/>
    <property type="match status" value="1"/>
</dbReference>
<sequence>MIKILGIESSCDDTAVSIITENREILSNIIISQNTEHAVFGGVVPEIAARSHLSHLDKALKNVLKESNTKLTDISTIAATSGPGLIGGVIVGSMFARSLSSALKKPFIAINHLEGHALTARLTDNIPYPYLLLLASGGHCQFVAVLGLGKYKILGSTIDDAVGEAFDKVAKMLNLAFPGGPEIEKRAKLGDPHKYKFPKPIINSGNCNMSFSGLKTAVRTLIINLKEINDTVINDIAASFQFTIGEILSSKVQDAIRAYEQITNNFDKKNIVIAGGVAANKYLQKILSSCAKTYGYRLIYPPIHLCTDNAAMIAYAGLERYNNKLFTPLNFCPKARWSLEDISN</sequence>
<reference key="1">
    <citation type="journal article" date="2009" name="PLoS ONE">
        <title>Genome sequence of the endosymbiont Rickettsia peacockii and comparison with virulent Rickettsia rickettsii: identification of virulence factors.</title>
        <authorList>
            <person name="Felsheim R.F."/>
            <person name="Kurtti T.J."/>
            <person name="Munderloh U.G."/>
        </authorList>
    </citation>
    <scope>NUCLEOTIDE SEQUENCE [LARGE SCALE GENOMIC DNA]</scope>
    <source>
        <strain>Rustic</strain>
    </source>
</reference>
<protein>
    <recommendedName>
        <fullName evidence="1">tRNA N6-adenosine threonylcarbamoyltransferase</fullName>
        <ecNumber evidence="1">2.3.1.234</ecNumber>
    </recommendedName>
    <alternativeName>
        <fullName evidence="1">N6-L-threonylcarbamoyladenine synthase</fullName>
        <shortName evidence="1">t(6)A synthase</shortName>
    </alternativeName>
    <alternativeName>
        <fullName evidence="1">t(6)A37 threonylcarbamoyladenosine biosynthesis protein TsaD</fullName>
    </alternativeName>
    <alternativeName>
        <fullName evidence="1">tRNA threonylcarbamoyladenosine biosynthesis protein TsaD</fullName>
    </alternativeName>
</protein>
<organism>
    <name type="scientific">Rickettsia peacockii (strain Rustic)</name>
    <dbReference type="NCBI Taxonomy" id="562019"/>
    <lineage>
        <taxon>Bacteria</taxon>
        <taxon>Pseudomonadati</taxon>
        <taxon>Pseudomonadota</taxon>
        <taxon>Alphaproteobacteria</taxon>
        <taxon>Rickettsiales</taxon>
        <taxon>Rickettsiaceae</taxon>
        <taxon>Rickettsieae</taxon>
        <taxon>Rickettsia</taxon>
        <taxon>spotted fever group</taxon>
    </lineage>
</organism>
<keyword id="KW-0012">Acyltransferase</keyword>
<keyword id="KW-0963">Cytoplasm</keyword>
<keyword id="KW-0408">Iron</keyword>
<keyword id="KW-0479">Metal-binding</keyword>
<keyword id="KW-0808">Transferase</keyword>
<keyword id="KW-0819">tRNA processing</keyword>
<comment type="function">
    <text evidence="1">Required for the formation of a threonylcarbamoyl group on adenosine at position 37 (t(6)A37) in tRNAs that read codons beginning with adenine. Is involved in the transfer of the threonylcarbamoyl moiety of threonylcarbamoyl-AMP (TC-AMP) to the N6 group of A37, together with TsaE and TsaB. TsaD likely plays a direct catalytic role in this reaction.</text>
</comment>
<comment type="catalytic activity">
    <reaction evidence="1">
        <text>L-threonylcarbamoyladenylate + adenosine(37) in tRNA = N(6)-L-threonylcarbamoyladenosine(37) in tRNA + AMP + H(+)</text>
        <dbReference type="Rhea" id="RHEA:37059"/>
        <dbReference type="Rhea" id="RHEA-COMP:10162"/>
        <dbReference type="Rhea" id="RHEA-COMP:10163"/>
        <dbReference type="ChEBI" id="CHEBI:15378"/>
        <dbReference type="ChEBI" id="CHEBI:73682"/>
        <dbReference type="ChEBI" id="CHEBI:74411"/>
        <dbReference type="ChEBI" id="CHEBI:74418"/>
        <dbReference type="ChEBI" id="CHEBI:456215"/>
        <dbReference type="EC" id="2.3.1.234"/>
    </reaction>
</comment>
<comment type="cofactor">
    <cofactor evidence="1">
        <name>Fe(2+)</name>
        <dbReference type="ChEBI" id="CHEBI:29033"/>
    </cofactor>
    <text evidence="1">Binds 1 Fe(2+) ion per subunit.</text>
</comment>
<comment type="subcellular location">
    <subcellularLocation>
        <location evidence="1">Cytoplasm</location>
    </subcellularLocation>
</comment>
<comment type="similarity">
    <text evidence="1">Belongs to the KAE1 / TsaD family.</text>
</comment>
<evidence type="ECO:0000255" key="1">
    <source>
        <dbReference type="HAMAP-Rule" id="MF_01445"/>
    </source>
</evidence>
<gene>
    <name evidence="1" type="primary">tsaD</name>
    <name type="synonym">gcp</name>
    <name type="ordered locus">RPR_02360</name>
</gene>